<feature type="chain" id="PRO_0000353585" description="DNA-directed RNA polymerase subunit beta''">
    <location>
        <begin position="1"/>
        <end position="2430"/>
    </location>
</feature>
<feature type="binding site" evidence="1">
    <location>
        <position position="336"/>
    </location>
    <ligand>
        <name>Zn(2+)</name>
        <dbReference type="ChEBI" id="CHEBI:29105"/>
    </ligand>
</feature>
<feature type="binding site" evidence="1">
    <location>
        <position position="455"/>
    </location>
    <ligand>
        <name>Zn(2+)</name>
        <dbReference type="ChEBI" id="CHEBI:29105"/>
    </ligand>
</feature>
<feature type="binding site" evidence="1">
    <location>
        <position position="462"/>
    </location>
    <ligand>
        <name>Zn(2+)</name>
        <dbReference type="ChEBI" id="CHEBI:29105"/>
    </ligand>
</feature>
<feature type="binding site" evidence="1">
    <location>
        <position position="465"/>
    </location>
    <ligand>
        <name>Zn(2+)</name>
        <dbReference type="ChEBI" id="CHEBI:29105"/>
    </ligand>
</feature>
<dbReference type="EC" id="2.7.7.6" evidence="1"/>
<dbReference type="EMBL" id="DQ630521">
    <property type="protein sequence ID" value="ABF60191.1"/>
    <property type="molecule type" value="Genomic_DNA"/>
</dbReference>
<dbReference type="RefSeq" id="YP_764414.2">
    <property type="nucleotide sequence ID" value="NC_008372.1"/>
</dbReference>
<dbReference type="GeneID" id="4308371"/>
<dbReference type="GO" id="GO:0009507">
    <property type="term" value="C:chloroplast"/>
    <property type="evidence" value="ECO:0007669"/>
    <property type="project" value="UniProtKB-SubCell"/>
</dbReference>
<dbReference type="GO" id="GO:0000428">
    <property type="term" value="C:DNA-directed RNA polymerase complex"/>
    <property type="evidence" value="ECO:0007669"/>
    <property type="project" value="UniProtKB-KW"/>
</dbReference>
<dbReference type="GO" id="GO:0005739">
    <property type="term" value="C:mitochondrion"/>
    <property type="evidence" value="ECO:0007669"/>
    <property type="project" value="GOC"/>
</dbReference>
<dbReference type="GO" id="GO:0003677">
    <property type="term" value="F:DNA binding"/>
    <property type="evidence" value="ECO:0007669"/>
    <property type="project" value="UniProtKB-UniRule"/>
</dbReference>
<dbReference type="GO" id="GO:0003899">
    <property type="term" value="F:DNA-directed RNA polymerase activity"/>
    <property type="evidence" value="ECO:0007669"/>
    <property type="project" value="UniProtKB-UniRule"/>
</dbReference>
<dbReference type="GO" id="GO:0008270">
    <property type="term" value="F:zinc ion binding"/>
    <property type="evidence" value="ECO:0007669"/>
    <property type="project" value="UniProtKB-UniRule"/>
</dbReference>
<dbReference type="GO" id="GO:0006351">
    <property type="term" value="P:DNA-templated transcription"/>
    <property type="evidence" value="ECO:0007669"/>
    <property type="project" value="UniProtKB-UniRule"/>
</dbReference>
<dbReference type="CDD" id="cd02655">
    <property type="entry name" value="RNAP_beta'_C"/>
    <property type="match status" value="1"/>
</dbReference>
<dbReference type="Gene3D" id="1.10.132.30">
    <property type="match status" value="1"/>
</dbReference>
<dbReference type="Gene3D" id="1.10.150.390">
    <property type="match status" value="1"/>
</dbReference>
<dbReference type="Gene3D" id="1.10.1790.20">
    <property type="match status" value="1"/>
</dbReference>
<dbReference type="Gene3D" id="1.10.274.100">
    <property type="entry name" value="RNA polymerase Rpb1, domain 3"/>
    <property type="match status" value="1"/>
</dbReference>
<dbReference type="HAMAP" id="MF_01324">
    <property type="entry name" value="RNApol_bact_RpoC2"/>
    <property type="match status" value="1"/>
</dbReference>
<dbReference type="InterPro" id="IPR012756">
    <property type="entry name" value="DNA-dir_RpoC2_beta_pp"/>
</dbReference>
<dbReference type="InterPro" id="IPR045867">
    <property type="entry name" value="DNA-dir_RpoC_beta_prime"/>
</dbReference>
<dbReference type="InterPro" id="IPR007066">
    <property type="entry name" value="RNA_pol_Rpb1_3"/>
</dbReference>
<dbReference type="InterPro" id="IPR042102">
    <property type="entry name" value="RNA_pol_Rpb1_3_sf"/>
</dbReference>
<dbReference type="InterPro" id="IPR007083">
    <property type="entry name" value="RNA_pol_Rpb1_4"/>
</dbReference>
<dbReference type="InterPro" id="IPR007081">
    <property type="entry name" value="RNA_pol_Rpb1_5"/>
</dbReference>
<dbReference type="InterPro" id="IPR038120">
    <property type="entry name" value="Rpb1_funnel_sf"/>
</dbReference>
<dbReference type="PANTHER" id="PTHR19376">
    <property type="entry name" value="DNA-DIRECTED RNA POLYMERASE"/>
    <property type="match status" value="1"/>
</dbReference>
<dbReference type="PANTHER" id="PTHR19376:SF68">
    <property type="entry name" value="DNA-DIRECTED RNA POLYMERASE SUBUNIT BETA"/>
    <property type="match status" value="1"/>
</dbReference>
<dbReference type="Pfam" id="PF04983">
    <property type="entry name" value="RNA_pol_Rpb1_3"/>
    <property type="match status" value="1"/>
</dbReference>
<dbReference type="Pfam" id="PF05000">
    <property type="entry name" value="RNA_pol_Rpb1_4"/>
    <property type="match status" value="1"/>
</dbReference>
<dbReference type="Pfam" id="PF04998">
    <property type="entry name" value="RNA_pol_Rpb1_5"/>
    <property type="match status" value="1"/>
</dbReference>
<dbReference type="SUPFAM" id="SSF64484">
    <property type="entry name" value="beta and beta-prime subunits of DNA dependent RNA-polymerase"/>
    <property type="match status" value="2"/>
</dbReference>
<comment type="function">
    <text evidence="1">DNA-dependent RNA polymerase catalyzes the transcription of DNA into RNA using the four ribonucleoside triphosphates as substrates.</text>
</comment>
<comment type="catalytic activity">
    <reaction evidence="1">
        <text>RNA(n) + a ribonucleoside 5'-triphosphate = RNA(n+1) + diphosphate</text>
        <dbReference type="Rhea" id="RHEA:21248"/>
        <dbReference type="Rhea" id="RHEA-COMP:14527"/>
        <dbReference type="Rhea" id="RHEA-COMP:17342"/>
        <dbReference type="ChEBI" id="CHEBI:33019"/>
        <dbReference type="ChEBI" id="CHEBI:61557"/>
        <dbReference type="ChEBI" id="CHEBI:140395"/>
        <dbReference type="EC" id="2.7.7.6"/>
    </reaction>
</comment>
<comment type="cofactor">
    <cofactor evidence="1">
        <name>Zn(2+)</name>
        <dbReference type="ChEBI" id="CHEBI:29105"/>
    </cofactor>
    <text evidence="1">Binds 1 Zn(2+) ion per subunit.</text>
</comment>
<comment type="subunit">
    <text evidence="1">In plastids the minimal PEP RNA polymerase catalytic core is composed of four subunits: alpha, beta, beta', and beta''. When a (nuclear-encoded) sigma factor is associated with the core the holoenzyme is formed, which can initiate transcription.</text>
</comment>
<comment type="subcellular location">
    <subcellularLocation>
        <location evidence="1">Plastid</location>
        <location evidence="1">Chloroplast</location>
    </subcellularLocation>
</comment>
<comment type="similarity">
    <text evidence="1">Belongs to the RNA polymerase beta' chain family. RpoC2 subfamily.</text>
</comment>
<accession>Q06SF2</accession>
<geneLocation type="chloroplast"/>
<gene>
    <name evidence="1" type="primary">rpoC2</name>
</gene>
<proteinExistence type="inferred from homology"/>
<keyword id="KW-0150">Chloroplast</keyword>
<keyword id="KW-0240">DNA-directed RNA polymerase</keyword>
<keyword id="KW-0479">Metal-binding</keyword>
<keyword id="KW-0548">Nucleotidyltransferase</keyword>
<keyword id="KW-0934">Plastid</keyword>
<keyword id="KW-0804">Transcription</keyword>
<keyword id="KW-0808">Transferase</keyword>
<keyword id="KW-0862">Zinc</keyword>
<reference key="1">
    <citation type="journal article" date="2006" name="Mol. Genet. Genomics">
        <title>Distinctive architecture of the chloroplast genome in the chlorophycean green alga Stigeoclonium helveticum.</title>
        <authorList>
            <person name="Belanger A.-S."/>
            <person name="Brouard J.-S."/>
            <person name="Charlebois P."/>
            <person name="Otis C."/>
            <person name="Lemieux C."/>
            <person name="Turmel M."/>
        </authorList>
    </citation>
    <scope>NUCLEOTIDE SEQUENCE [LARGE SCALE GENOMIC DNA]</scope>
    <source>
        <strain>UTEX 441</strain>
    </source>
</reference>
<protein>
    <recommendedName>
        <fullName evidence="1">DNA-directed RNA polymerase subunit beta''</fullName>
        <ecNumber evidence="1">2.7.7.6</ecNumber>
    </recommendedName>
    <alternativeName>
        <fullName evidence="1">PEP</fullName>
    </alternativeName>
    <alternativeName>
        <fullName evidence="1">Plastid-encoded RNA polymerase subunit beta''</fullName>
        <shortName evidence="1">RNA polymerase subunit beta''</shortName>
    </alternativeName>
</protein>
<sequence length="2430" mass="280075">MYLYKSIKSYKMQGKSKRKKEAFPTSKACGKLGKNRIFPLEEKRSGKKERPLALSFQASFFSPFFLFANCTRKTKTLKQNSLSLSSSYLNIFSDFSLYSLSPKKKTSLTDNKIVSFATKDFPQVFWNLSFNKGSLKNFVFWCFVNYGQRETIKILEKLQIIGFGYATKAGISLSIDDLKIPPTKAILLADADKSIEAGFLSYKKSQLTGLERFQRIIETWHKTSESLKDEMITNFRQTDSLNPVYMMAFSGARGNVSQVRQLVAMRGLMSDPQGKILDFPIRSNFREGLTLTEYVISCYGARKGVVDTALRTANAGYLTRRLVDVAQHVIVLNFDCGTKKGFYLTEMKKFNKTLYPLRQRLLGRVLAANLYNVNPFHLKKRIEIGEKEKNLSSLPSSKGKMEFFPSFPQASLAGKASCFPEPQIVAFRNQEISEPLAEKISKITNKVFIRSPLTCDTPRLVCQLCYGWSLSEGYLVSIGEAVGIIAAQSIGEPGTQLTMRTFHTGGVFAGEMFDQLMAPYDGIVQYSSSIPGTLVRTTQGKIAFLTKVEGKLSVFEKNNSTFLSNSNNGDNHSLISHTISHKSFKLPAYTLLFIRNNETISKDQLIAELAFLSSKGKKKGEIAEFIVKSEIEGQLYSGSVNILEKYTDYNDIMTKSIDWGSVWILSGKICQLPVNSSFFALPGDLVDENAILSQIQWVVPMKSLLDTNSLIKPNLKKEIYFDFSLNQTKWFQKRNLENLNTLFNLKFGIEKKNRTKKRVLSQEKKSDFLNPSFSHSSRNYLYFSLPSKKTFSYYPFAYFSKIKEKNGGRETKSSFAMSGWGKKSLSFFPSLASDVPKLLSDFYPTSKKRNFKSFEKKELKLSSFSQTIFFNQDKSLLLKMKIKIQTISDFTKVSSKMITSRELKKNGMEKGKNGEKENSSLQRTFFSQGAKAPAFPELFSFFSSRLFPILPFKSSLVSSTFSHNSQLCTIRRQNKLVLSGNSNQFENFAYLKDKITINLPLIFLCIDNIYYKKIGYFFSLFPPESKIPREKFLPEEEGFSPPSFGRTFKNKNLAKLKDVFFVPKLLEQRNIISTKKKNSFKKNNQISNQLLHWFPKSYLTMKGGICVYRLTHDFFCQYINFHSSSFLFEKKRGTLICNVDGEMNKPVSSNILGRICWVNQDYKKTKLYTLKFFSYSKFIQQLTDRTKRLQRQIKREKKIGQADFFQTVLSMSQAKEKSSLQRTFFSQGAKSRKKVPPKTLLSGEMPIFSLSPSLCGLKPAKRSEKEKIWVKGEKAELFSLSNAFHQPQHSKKHKYSSFSLNFYKNLTSYCLKNKDKSVANCFSEKKKRQFLFFSEPKLSLFPDFLFSKSEKNIFYNANKKKYSFFYLKKTNSSKKSLTNNSIMNGFIYKPKDVVSAISLHKKFFLPGQKIIDDLSFDNFLIYVECIPEDNLSSLSETLYKSRFDKKICFNLKKLITNKMPRFIKIPTLLSTIPFAFLKSEFKEQNEKIAQRKADRQKNNKKSEAFFFKSNTLVSDFDSPFLSHLVVLITKVIEYPLYKPNHYKKALYNRQKTSEQSFFHYSCKVKSKMLNKIFKNNYHSNVLNKQTSSLRLLDKFPNTDLVLALKCKGIQKDLMENFLKNPLNLNLYVKLGKQKSFGKEKDKTFSVSQPFFKSSAFKKEKKSNSFSQAKAFDFNLTSKKSRKKANKLVENLANGKKSRAFPASKACGKLGKNYIFPLEERKNGKKERAKASSFPGLLSFSHLAFPIFFRKSFSKFFCMKFFSKSSIQLLELVLVGVQKNSVNNKIIGITVFNFFQKNKLKEEEKKRQEEKEIFRSLSLSPLFLSHLTRKKNSDFFSVSKSEALEKKKLQLLFFSHAAFPLKEISKNYSSKASFLSFFHFLDKKIKKQTRRQANFVVSAFEKSDFSFDPNINRKKKYFSNKAFNYENIKIMNNNISQSILQPNFYFNYYQKYPFGYYLINNINVFAPSSFSFSSLFSRNTANFKNYFLFYQLLSMFNRPNFQLHKSMEENLLQVYEQSTSYFSLISCFFQQPCFDAFFTQQVSFGFNEVKNVNHYSKNLTFSKKIGKRREFYLSPFLRSKIYFKKNSFSEQGEIALTQYLSPFMGEILNHENYYWSQNTQKNRYLLLTKKDQISFLSTNYNTQKESINNSSFFILKNKKNTPNLGEFLTKGDCCFISKSQNSIISSESGLIVHSNKSKITLRKAQSFFLSPNCIFHYSHGDLVEKNKSILSLPYEQLKTGDIVQGIPKVEQLLEARSTFKGKEEEDNLHKLLKYAFELYKTKFSLKLSVRKSFSFIQLILVNSVQRIYRSQGVSISDKHLEVIVKQMTSKVQITSRGDSSFFRGEHVDLYIVETWNALHPQLKKICYKPILLGISRSSLEVNSFLSAASFQHTKKVLSRSAFKTNIDFLNGLKENVIIGNLISAGTGNLNN</sequence>
<evidence type="ECO:0000255" key="1">
    <source>
        <dbReference type="HAMAP-Rule" id="MF_01324"/>
    </source>
</evidence>
<name>RPOC2_STIHE</name>
<organism>
    <name type="scientific">Stigeoclonium helveticum</name>
    <name type="common">Green alga</name>
    <dbReference type="NCBI Taxonomy" id="55999"/>
    <lineage>
        <taxon>Eukaryota</taxon>
        <taxon>Viridiplantae</taxon>
        <taxon>Chlorophyta</taxon>
        <taxon>core chlorophytes</taxon>
        <taxon>Chlorophyceae</taxon>
        <taxon>OCC clade</taxon>
        <taxon>Chaetophorales</taxon>
        <taxon>Chaetophoraceae</taxon>
        <taxon>Stigeoclonium</taxon>
    </lineage>
</organism>